<reference key="1">
    <citation type="journal article" date="1999" name="Nature">
        <title>Sequence and analysis of chromosome 2 of the plant Arabidopsis thaliana.</title>
        <authorList>
            <person name="Lin X."/>
            <person name="Kaul S."/>
            <person name="Rounsley S.D."/>
            <person name="Shea T.P."/>
            <person name="Benito M.-I."/>
            <person name="Town C.D."/>
            <person name="Fujii C.Y."/>
            <person name="Mason T.M."/>
            <person name="Bowman C.L."/>
            <person name="Barnstead M.E."/>
            <person name="Feldblyum T.V."/>
            <person name="Buell C.R."/>
            <person name="Ketchum K.A."/>
            <person name="Lee J.J."/>
            <person name="Ronning C.M."/>
            <person name="Koo H.L."/>
            <person name="Moffat K.S."/>
            <person name="Cronin L.A."/>
            <person name="Shen M."/>
            <person name="Pai G."/>
            <person name="Van Aken S."/>
            <person name="Umayam L."/>
            <person name="Tallon L.J."/>
            <person name="Gill J.E."/>
            <person name="Adams M.D."/>
            <person name="Carrera A.J."/>
            <person name="Creasy T.H."/>
            <person name="Goodman H.M."/>
            <person name="Somerville C.R."/>
            <person name="Copenhaver G.P."/>
            <person name="Preuss D."/>
            <person name="Nierman W.C."/>
            <person name="White O."/>
            <person name="Eisen J.A."/>
            <person name="Salzberg S.L."/>
            <person name="Fraser C.M."/>
            <person name="Venter J.C."/>
        </authorList>
    </citation>
    <scope>NUCLEOTIDE SEQUENCE [LARGE SCALE GENOMIC DNA]</scope>
    <source>
        <strain>cv. Columbia</strain>
    </source>
</reference>
<reference key="2">
    <citation type="journal article" date="2017" name="Plant J.">
        <title>Araport11: a complete reannotation of the Arabidopsis thaliana reference genome.</title>
        <authorList>
            <person name="Cheng C.Y."/>
            <person name="Krishnakumar V."/>
            <person name="Chan A.P."/>
            <person name="Thibaud-Nissen F."/>
            <person name="Schobel S."/>
            <person name="Town C.D."/>
        </authorList>
    </citation>
    <scope>GENOME REANNOTATION</scope>
    <source>
        <strain>cv. Columbia</strain>
    </source>
</reference>
<reference key="3">
    <citation type="journal article" date="2002" name="Gene">
        <title>Analysis and expression of the class III peroxidase large gene family in Arabidopsis thaliana.</title>
        <authorList>
            <person name="Tognolli M."/>
            <person name="Penel C."/>
            <person name="Greppin H."/>
            <person name="Simon P."/>
        </authorList>
    </citation>
    <scope>GENE FAMILY ORGANIZATION</scope>
    <scope>NOMENCLATURE</scope>
    <source>
        <strain>cv. Columbia</strain>
    </source>
</reference>
<evidence type="ECO:0000255" key="1"/>
<evidence type="ECO:0000255" key="2">
    <source>
        <dbReference type="PROSITE-ProRule" id="PRU00297"/>
    </source>
</evidence>
<feature type="signal peptide" evidence="1">
    <location>
        <begin position="1"/>
        <end position="29"/>
    </location>
</feature>
<feature type="chain" id="PRO_0000023684" description="Peroxidase 18">
    <location>
        <begin position="30"/>
        <end position="329"/>
    </location>
</feature>
<feature type="active site" description="Proton acceptor" evidence="2">
    <location>
        <position position="71"/>
    </location>
</feature>
<feature type="binding site" evidence="2">
    <location>
        <position position="72"/>
    </location>
    <ligand>
        <name>Ca(2+)</name>
        <dbReference type="ChEBI" id="CHEBI:29108"/>
        <label>1</label>
    </ligand>
</feature>
<feature type="binding site" evidence="2">
    <location>
        <position position="75"/>
    </location>
    <ligand>
        <name>Ca(2+)</name>
        <dbReference type="ChEBI" id="CHEBI:29108"/>
        <label>1</label>
    </ligand>
</feature>
<feature type="binding site" evidence="2">
    <location>
        <position position="77"/>
    </location>
    <ligand>
        <name>Ca(2+)</name>
        <dbReference type="ChEBI" id="CHEBI:29108"/>
        <label>1</label>
    </ligand>
</feature>
<feature type="binding site" evidence="2">
    <location>
        <position position="79"/>
    </location>
    <ligand>
        <name>Ca(2+)</name>
        <dbReference type="ChEBI" id="CHEBI:29108"/>
        <label>1</label>
    </ligand>
</feature>
<feature type="binding site" evidence="2">
    <location>
        <position position="81"/>
    </location>
    <ligand>
        <name>Ca(2+)</name>
        <dbReference type="ChEBI" id="CHEBI:29108"/>
        <label>1</label>
    </ligand>
</feature>
<feature type="binding site" evidence="2">
    <location>
        <position position="164"/>
    </location>
    <ligand>
        <name>substrate</name>
    </ligand>
</feature>
<feature type="binding site" description="axial binding residue" evidence="2">
    <location>
        <position position="194"/>
    </location>
    <ligand>
        <name>heme b</name>
        <dbReference type="ChEBI" id="CHEBI:60344"/>
    </ligand>
    <ligandPart>
        <name>Fe</name>
        <dbReference type="ChEBI" id="CHEBI:18248"/>
    </ligandPart>
</feature>
<feature type="binding site" evidence="2">
    <location>
        <position position="195"/>
    </location>
    <ligand>
        <name>Ca(2+)</name>
        <dbReference type="ChEBI" id="CHEBI:29108"/>
        <label>2</label>
    </ligand>
</feature>
<feature type="binding site" evidence="2">
    <location>
        <position position="249"/>
    </location>
    <ligand>
        <name>Ca(2+)</name>
        <dbReference type="ChEBI" id="CHEBI:29108"/>
        <label>2</label>
    </ligand>
</feature>
<feature type="binding site" evidence="2">
    <location>
        <position position="252"/>
    </location>
    <ligand>
        <name>Ca(2+)</name>
        <dbReference type="ChEBI" id="CHEBI:29108"/>
        <label>2</label>
    </ligand>
</feature>
<feature type="binding site" evidence="2">
    <location>
        <position position="257"/>
    </location>
    <ligand>
        <name>Ca(2+)</name>
        <dbReference type="ChEBI" id="CHEBI:29108"/>
        <label>2</label>
    </ligand>
</feature>
<feature type="site" description="Transition state stabilizer" evidence="2">
    <location>
        <position position="67"/>
    </location>
</feature>
<feature type="glycosylation site" description="N-linked (GlcNAc...) asparagine" evidence="1">
    <location>
        <position position="87"/>
    </location>
</feature>
<feature type="disulfide bond" evidence="2">
    <location>
        <begin position="40"/>
        <end position="116"/>
    </location>
</feature>
<feature type="disulfide bond" evidence="2">
    <location>
        <begin position="73"/>
        <end position="78"/>
    </location>
</feature>
<feature type="disulfide bond" evidence="2">
    <location>
        <begin position="122"/>
        <end position="325"/>
    </location>
</feature>
<feature type="disulfide bond" evidence="2">
    <location>
        <begin position="201"/>
        <end position="235"/>
    </location>
</feature>
<protein>
    <recommendedName>
        <fullName>Peroxidase 18</fullName>
        <shortName>Atperox P18</shortName>
        <ecNumber>1.11.1.7</ecNumber>
    </recommendedName>
</protein>
<organism>
    <name type="scientific">Arabidopsis thaliana</name>
    <name type="common">Mouse-ear cress</name>
    <dbReference type="NCBI Taxonomy" id="3702"/>
    <lineage>
        <taxon>Eukaryota</taxon>
        <taxon>Viridiplantae</taxon>
        <taxon>Streptophyta</taxon>
        <taxon>Embryophyta</taxon>
        <taxon>Tracheophyta</taxon>
        <taxon>Spermatophyta</taxon>
        <taxon>Magnoliopsida</taxon>
        <taxon>eudicotyledons</taxon>
        <taxon>Gunneridae</taxon>
        <taxon>Pentapetalae</taxon>
        <taxon>rosids</taxon>
        <taxon>malvids</taxon>
        <taxon>Brassicales</taxon>
        <taxon>Brassicaceae</taxon>
        <taxon>Camelineae</taxon>
        <taxon>Arabidopsis</taxon>
    </lineage>
</organism>
<proteinExistence type="inferred from homology"/>
<name>PER18_ARATH</name>
<dbReference type="EC" id="1.11.1.7"/>
<dbReference type="EMBL" id="AC006585">
    <property type="protein sequence ID" value="AAD23032.1"/>
    <property type="molecule type" value="Genomic_DNA"/>
</dbReference>
<dbReference type="EMBL" id="CP002685">
    <property type="protein sequence ID" value="AEC07630.1"/>
    <property type="molecule type" value="Genomic_DNA"/>
</dbReference>
<dbReference type="PIR" id="F84640">
    <property type="entry name" value="F84640"/>
</dbReference>
<dbReference type="RefSeq" id="NP_180053.1">
    <property type="nucleotide sequence ID" value="NM_128039.2"/>
</dbReference>
<dbReference type="SMR" id="Q9SK52"/>
<dbReference type="BioGRID" id="2369">
    <property type="interactions" value="1"/>
</dbReference>
<dbReference type="FunCoup" id="Q9SK52">
    <property type="interactions" value="129"/>
</dbReference>
<dbReference type="STRING" id="3702.Q9SK52"/>
<dbReference type="PeroxiBase" id="99">
    <property type="entry name" value="AtPrx18"/>
</dbReference>
<dbReference type="GlyCosmos" id="Q9SK52">
    <property type="glycosylation" value="1 site, No reported glycans"/>
</dbReference>
<dbReference type="GlyGen" id="Q9SK52">
    <property type="glycosylation" value="1 site"/>
</dbReference>
<dbReference type="PaxDb" id="3702-AT2G24800.1"/>
<dbReference type="EnsemblPlants" id="AT2G24800.1">
    <property type="protein sequence ID" value="AT2G24800.1"/>
    <property type="gene ID" value="AT2G24800"/>
</dbReference>
<dbReference type="GeneID" id="817017"/>
<dbReference type="Gramene" id="AT2G24800.1">
    <property type="protein sequence ID" value="AT2G24800.1"/>
    <property type="gene ID" value="AT2G24800"/>
</dbReference>
<dbReference type="KEGG" id="ath:AT2G24800"/>
<dbReference type="Araport" id="AT2G24800"/>
<dbReference type="TAIR" id="AT2G24800"/>
<dbReference type="eggNOG" id="ENOG502QT3T">
    <property type="taxonomic scope" value="Eukaryota"/>
</dbReference>
<dbReference type="HOGENOM" id="CLU_010543_0_3_1"/>
<dbReference type="InParanoid" id="Q9SK52"/>
<dbReference type="OMA" id="NTDYANE"/>
<dbReference type="OrthoDB" id="2113341at2759"/>
<dbReference type="PhylomeDB" id="Q9SK52"/>
<dbReference type="BioCyc" id="ARA:AT2G24800-MONOMER"/>
<dbReference type="PRO" id="PR:Q9SK52"/>
<dbReference type="Proteomes" id="UP000006548">
    <property type="component" value="Chromosome 2"/>
</dbReference>
<dbReference type="ExpressionAtlas" id="Q9SK52">
    <property type="expression patterns" value="baseline and differential"/>
</dbReference>
<dbReference type="GO" id="GO:0005576">
    <property type="term" value="C:extracellular region"/>
    <property type="evidence" value="ECO:0007669"/>
    <property type="project" value="UniProtKB-SubCell"/>
</dbReference>
<dbReference type="GO" id="GO:0020037">
    <property type="term" value="F:heme binding"/>
    <property type="evidence" value="ECO:0007669"/>
    <property type="project" value="InterPro"/>
</dbReference>
<dbReference type="GO" id="GO:0140825">
    <property type="term" value="F:lactoperoxidase activity"/>
    <property type="evidence" value="ECO:0007669"/>
    <property type="project" value="UniProtKB-EC"/>
</dbReference>
<dbReference type="GO" id="GO:0046872">
    <property type="term" value="F:metal ion binding"/>
    <property type="evidence" value="ECO:0007669"/>
    <property type="project" value="UniProtKB-KW"/>
</dbReference>
<dbReference type="GO" id="GO:0042744">
    <property type="term" value="P:hydrogen peroxide catabolic process"/>
    <property type="evidence" value="ECO:0007669"/>
    <property type="project" value="UniProtKB-KW"/>
</dbReference>
<dbReference type="GO" id="GO:0006979">
    <property type="term" value="P:response to oxidative stress"/>
    <property type="evidence" value="ECO:0007669"/>
    <property type="project" value="InterPro"/>
</dbReference>
<dbReference type="CDD" id="cd00693">
    <property type="entry name" value="secretory_peroxidase"/>
    <property type="match status" value="1"/>
</dbReference>
<dbReference type="FunFam" id="1.10.420.10:FF:000001">
    <property type="entry name" value="Peroxidase"/>
    <property type="match status" value="1"/>
</dbReference>
<dbReference type="FunFam" id="1.10.520.10:FF:000008">
    <property type="entry name" value="Peroxidase"/>
    <property type="match status" value="1"/>
</dbReference>
<dbReference type="Gene3D" id="1.10.520.10">
    <property type="match status" value="1"/>
</dbReference>
<dbReference type="Gene3D" id="1.10.420.10">
    <property type="entry name" value="Peroxidase, domain 2"/>
    <property type="match status" value="1"/>
</dbReference>
<dbReference type="InterPro" id="IPR002016">
    <property type="entry name" value="Haem_peroxidase"/>
</dbReference>
<dbReference type="InterPro" id="IPR010255">
    <property type="entry name" value="Haem_peroxidase_sf"/>
</dbReference>
<dbReference type="InterPro" id="IPR000823">
    <property type="entry name" value="Peroxidase_pln"/>
</dbReference>
<dbReference type="InterPro" id="IPR019793">
    <property type="entry name" value="Peroxidases_heam-ligand_BS"/>
</dbReference>
<dbReference type="InterPro" id="IPR033905">
    <property type="entry name" value="Secretory_peroxidase"/>
</dbReference>
<dbReference type="PANTHER" id="PTHR31517">
    <property type="match status" value="1"/>
</dbReference>
<dbReference type="PANTHER" id="PTHR31517:SF17">
    <property type="entry name" value="PEROXIDASE 6"/>
    <property type="match status" value="1"/>
</dbReference>
<dbReference type="Pfam" id="PF00141">
    <property type="entry name" value="peroxidase"/>
    <property type="match status" value="1"/>
</dbReference>
<dbReference type="PRINTS" id="PR00458">
    <property type="entry name" value="PEROXIDASE"/>
</dbReference>
<dbReference type="PRINTS" id="PR00461">
    <property type="entry name" value="PLPEROXIDASE"/>
</dbReference>
<dbReference type="SUPFAM" id="SSF48113">
    <property type="entry name" value="Heme-dependent peroxidases"/>
    <property type="match status" value="1"/>
</dbReference>
<dbReference type="PROSITE" id="PS00435">
    <property type="entry name" value="PEROXIDASE_1"/>
    <property type="match status" value="1"/>
</dbReference>
<dbReference type="PROSITE" id="PS50873">
    <property type="entry name" value="PEROXIDASE_4"/>
    <property type="match status" value="1"/>
</dbReference>
<accession>Q9SK52</accession>
<comment type="function">
    <text>Removal of H(2)O(2), oxidation of toxic reductants, biosynthesis and degradation of lignin, suberization, auxin catabolism, response to environmental stresses such as wounding, pathogen attack and oxidative stress. These functions might be dependent on each isozyme/isoform in each plant tissue.</text>
</comment>
<comment type="catalytic activity">
    <reaction>
        <text>2 a phenolic donor + H2O2 = 2 a phenolic radical donor + 2 H2O</text>
        <dbReference type="Rhea" id="RHEA:56136"/>
        <dbReference type="ChEBI" id="CHEBI:15377"/>
        <dbReference type="ChEBI" id="CHEBI:16240"/>
        <dbReference type="ChEBI" id="CHEBI:139520"/>
        <dbReference type="ChEBI" id="CHEBI:139521"/>
        <dbReference type="EC" id="1.11.1.7"/>
    </reaction>
</comment>
<comment type="cofactor">
    <cofactor evidence="2">
        <name>heme b</name>
        <dbReference type="ChEBI" id="CHEBI:60344"/>
    </cofactor>
    <text evidence="2">Binds 1 heme b (iron(II)-protoporphyrin IX) group per subunit.</text>
</comment>
<comment type="cofactor">
    <cofactor evidence="2">
        <name>Ca(2+)</name>
        <dbReference type="ChEBI" id="CHEBI:29108"/>
    </cofactor>
    <text evidence="2">Binds 2 calcium ions per subunit.</text>
</comment>
<comment type="subcellular location">
    <subcellularLocation>
        <location evidence="2">Secreted</location>
    </subcellularLocation>
</comment>
<comment type="miscellaneous">
    <text>There are 73 peroxidase genes in A.thaliana.</text>
</comment>
<comment type="similarity">
    <text evidence="2">Belongs to the peroxidase family. Classical plant (class III) peroxidase subfamily.</text>
</comment>
<gene>
    <name type="primary">PER18</name>
    <name type="synonym">P18</name>
    <name type="ordered locus">At2g24800</name>
    <name type="ORF">F27C12.28</name>
</gene>
<sequence length="329" mass="35641">MALQFFSCKPKYTFLSSLLLLLLLSSSVAELSFNFYAGSCPGAELIVRNTVRSASSSDPSVLGKLLRLIFHDCFVQGCDGSVLIRGNGTERSDPGNASLGGFAVIESVKNILEIFCPGTVSCADILVLAARDAVEALGGPVVPIPTGRRDGRVSMAANVRPNIIDTDFTVDKMINIFSSKGLSVHDLVVLSGAHTIGAAHCNTFNSRFKLDPKGNLELIDASLDNSYAQTLVNKCSSSLDPTTTVVDNDPETSSTFDNQYYKNLLAHKGLFQTDSALMEDDRTRKIVEILANDQESFFDRWTESFLKMSLMGVRVGEEGEIRRSCSAVN</sequence>
<keyword id="KW-0106">Calcium</keyword>
<keyword id="KW-1015">Disulfide bond</keyword>
<keyword id="KW-0325">Glycoprotein</keyword>
<keyword id="KW-0349">Heme</keyword>
<keyword id="KW-0376">Hydrogen peroxide</keyword>
<keyword id="KW-0408">Iron</keyword>
<keyword id="KW-0479">Metal-binding</keyword>
<keyword id="KW-0560">Oxidoreductase</keyword>
<keyword id="KW-0575">Peroxidase</keyword>
<keyword id="KW-1185">Reference proteome</keyword>
<keyword id="KW-0964">Secreted</keyword>
<keyword id="KW-0732">Signal</keyword>